<proteinExistence type="inferred from homology"/>
<organism>
    <name type="scientific">Pseudoalteromonas translucida (strain TAC 125)</name>
    <dbReference type="NCBI Taxonomy" id="326442"/>
    <lineage>
        <taxon>Bacteria</taxon>
        <taxon>Pseudomonadati</taxon>
        <taxon>Pseudomonadota</taxon>
        <taxon>Gammaproteobacteria</taxon>
        <taxon>Alteromonadales</taxon>
        <taxon>Pseudoalteromonadaceae</taxon>
        <taxon>Pseudoalteromonas</taxon>
    </lineage>
</organism>
<comment type="function">
    <text evidence="1">Part of the twin-arginine translocation (Tat) system that transports large folded proteins containing a characteristic twin-arginine motif in their signal peptide across membranes. TatA could form the protein-conducting channel of the Tat system.</text>
</comment>
<comment type="subunit">
    <text evidence="1">The Tat system comprises two distinct complexes: a TatABC complex, containing multiple copies of TatA, TatB and TatC subunits, and a separate TatA complex, containing only TatA subunits. Substrates initially bind to the TatABC complex, which probably triggers association of the separate TatA complex to form the active translocon.</text>
</comment>
<comment type="subcellular location">
    <subcellularLocation>
        <location evidence="1">Cell inner membrane</location>
        <topology evidence="1">Single-pass membrane protein</topology>
    </subcellularLocation>
</comment>
<comment type="similarity">
    <text evidence="1">Belongs to the TatA/E family.</text>
</comment>
<feature type="chain" id="PRO_0000336638" description="Sec-independent protein translocase protein TatA">
    <location>
        <begin position="1"/>
        <end position="82"/>
    </location>
</feature>
<feature type="transmembrane region" description="Helical" evidence="1">
    <location>
        <begin position="2"/>
        <end position="22"/>
    </location>
</feature>
<feature type="region of interest" description="Disordered" evidence="2">
    <location>
        <begin position="43"/>
        <end position="82"/>
    </location>
</feature>
<feature type="compositionally biased region" description="Basic and acidic residues" evidence="2">
    <location>
        <begin position="44"/>
        <end position="64"/>
    </location>
</feature>
<feature type="compositionally biased region" description="Basic and acidic residues" evidence="2">
    <location>
        <begin position="71"/>
        <end position="82"/>
    </location>
</feature>
<accession>Q3IJV4</accession>
<name>TATA_PSET1</name>
<sequence length="82" mass="8883">MGFGGISLWQLLIVLAIIVLLFGTKKLRGIGGDLGGAVKGFKKAMSDEKNTDKEKPEQIQKSEESAPLDSAHTEKNKDNNKV</sequence>
<gene>
    <name evidence="1" type="primary">tatA</name>
    <name type="ordered locus">PSHAa2929</name>
</gene>
<protein>
    <recommendedName>
        <fullName evidence="1">Sec-independent protein translocase protein TatA</fullName>
    </recommendedName>
</protein>
<evidence type="ECO:0000255" key="1">
    <source>
        <dbReference type="HAMAP-Rule" id="MF_00236"/>
    </source>
</evidence>
<evidence type="ECO:0000256" key="2">
    <source>
        <dbReference type="SAM" id="MobiDB-lite"/>
    </source>
</evidence>
<dbReference type="EMBL" id="CR954246">
    <property type="protein sequence ID" value="CAI87964.1"/>
    <property type="molecule type" value="Genomic_DNA"/>
</dbReference>
<dbReference type="SMR" id="Q3IJV4"/>
<dbReference type="STRING" id="326442.PSHAa2929"/>
<dbReference type="KEGG" id="pha:PSHAa2929"/>
<dbReference type="PATRIC" id="fig|326442.8.peg.2827"/>
<dbReference type="eggNOG" id="COG1826">
    <property type="taxonomic scope" value="Bacteria"/>
</dbReference>
<dbReference type="HOGENOM" id="CLU_086034_5_1_6"/>
<dbReference type="BioCyc" id="PHAL326442:PSHA_RS14390-MONOMER"/>
<dbReference type="Proteomes" id="UP000006843">
    <property type="component" value="Chromosome I"/>
</dbReference>
<dbReference type="GO" id="GO:0033281">
    <property type="term" value="C:TAT protein transport complex"/>
    <property type="evidence" value="ECO:0007669"/>
    <property type="project" value="UniProtKB-UniRule"/>
</dbReference>
<dbReference type="GO" id="GO:0008320">
    <property type="term" value="F:protein transmembrane transporter activity"/>
    <property type="evidence" value="ECO:0007669"/>
    <property type="project" value="UniProtKB-UniRule"/>
</dbReference>
<dbReference type="GO" id="GO:0043953">
    <property type="term" value="P:protein transport by the Tat complex"/>
    <property type="evidence" value="ECO:0007669"/>
    <property type="project" value="UniProtKB-UniRule"/>
</dbReference>
<dbReference type="Gene3D" id="1.20.5.3310">
    <property type="match status" value="1"/>
</dbReference>
<dbReference type="HAMAP" id="MF_00236">
    <property type="entry name" value="TatA_E"/>
    <property type="match status" value="1"/>
</dbReference>
<dbReference type="InterPro" id="IPR003369">
    <property type="entry name" value="TatA/B/E"/>
</dbReference>
<dbReference type="InterPro" id="IPR006312">
    <property type="entry name" value="TatA/E"/>
</dbReference>
<dbReference type="NCBIfam" id="NF002813">
    <property type="entry name" value="PRK02958.1"/>
    <property type="match status" value="1"/>
</dbReference>
<dbReference type="NCBIfam" id="TIGR01411">
    <property type="entry name" value="tatAE"/>
    <property type="match status" value="1"/>
</dbReference>
<dbReference type="PANTHER" id="PTHR42982">
    <property type="entry name" value="SEC-INDEPENDENT PROTEIN TRANSLOCASE PROTEIN TATA"/>
    <property type="match status" value="1"/>
</dbReference>
<dbReference type="PANTHER" id="PTHR42982:SF1">
    <property type="entry name" value="SEC-INDEPENDENT PROTEIN TRANSLOCASE PROTEIN TATA"/>
    <property type="match status" value="1"/>
</dbReference>
<dbReference type="Pfam" id="PF02416">
    <property type="entry name" value="TatA_B_E"/>
    <property type="match status" value="1"/>
</dbReference>
<keyword id="KW-0997">Cell inner membrane</keyword>
<keyword id="KW-1003">Cell membrane</keyword>
<keyword id="KW-0472">Membrane</keyword>
<keyword id="KW-0653">Protein transport</keyword>
<keyword id="KW-1185">Reference proteome</keyword>
<keyword id="KW-0811">Translocation</keyword>
<keyword id="KW-0812">Transmembrane</keyword>
<keyword id="KW-1133">Transmembrane helix</keyword>
<keyword id="KW-0813">Transport</keyword>
<reference key="1">
    <citation type="journal article" date="2005" name="Genome Res.">
        <title>Coping with cold: the genome of the versatile marine Antarctica bacterium Pseudoalteromonas haloplanktis TAC125.</title>
        <authorList>
            <person name="Medigue C."/>
            <person name="Krin E."/>
            <person name="Pascal G."/>
            <person name="Barbe V."/>
            <person name="Bernsel A."/>
            <person name="Bertin P.N."/>
            <person name="Cheung F."/>
            <person name="Cruveiller S."/>
            <person name="D'Amico S."/>
            <person name="Duilio A."/>
            <person name="Fang G."/>
            <person name="Feller G."/>
            <person name="Ho C."/>
            <person name="Mangenot S."/>
            <person name="Marino G."/>
            <person name="Nilsson J."/>
            <person name="Parrilli E."/>
            <person name="Rocha E.P.C."/>
            <person name="Rouy Z."/>
            <person name="Sekowska A."/>
            <person name="Tutino M.L."/>
            <person name="Vallenet D."/>
            <person name="von Heijne G."/>
            <person name="Danchin A."/>
        </authorList>
    </citation>
    <scope>NUCLEOTIDE SEQUENCE [LARGE SCALE GENOMIC DNA]</scope>
    <source>
        <strain>TAC 125</strain>
    </source>
</reference>